<gene>
    <name evidence="1" type="primary">speB</name>
    <name type="ordered locus">ECIAI1_3069</name>
</gene>
<dbReference type="EC" id="3.5.3.11" evidence="1"/>
<dbReference type="EMBL" id="CU928160">
    <property type="protein sequence ID" value="CAQ99884.1"/>
    <property type="molecule type" value="Genomic_DNA"/>
</dbReference>
<dbReference type="RefSeq" id="WP_000105566.1">
    <property type="nucleotide sequence ID" value="NC_011741.1"/>
</dbReference>
<dbReference type="SMR" id="B7LYW6"/>
<dbReference type="GeneID" id="89517749"/>
<dbReference type="KEGG" id="ecr:ECIAI1_3069"/>
<dbReference type="HOGENOM" id="CLU_039478_0_0_6"/>
<dbReference type="UniPathway" id="UPA00534">
    <property type="reaction ID" value="UER00287"/>
</dbReference>
<dbReference type="GO" id="GO:0008783">
    <property type="term" value="F:agmatinase activity"/>
    <property type="evidence" value="ECO:0007669"/>
    <property type="project" value="UniProtKB-UniRule"/>
</dbReference>
<dbReference type="GO" id="GO:0030145">
    <property type="term" value="F:manganese ion binding"/>
    <property type="evidence" value="ECO:0007669"/>
    <property type="project" value="InterPro"/>
</dbReference>
<dbReference type="GO" id="GO:0033389">
    <property type="term" value="P:putrescine biosynthetic process from arginine, via agmatine"/>
    <property type="evidence" value="ECO:0007669"/>
    <property type="project" value="TreeGrafter"/>
</dbReference>
<dbReference type="GO" id="GO:0008295">
    <property type="term" value="P:spermidine biosynthetic process"/>
    <property type="evidence" value="ECO:0007669"/>
    <property type="project" value="UniProtKB-UniRule"/>
</dbReference>
<dbReference type="CDD" id="cd11592">
    <property type="entry name" value="Agmatinase_PAH"/>
    <property type="match status" value="1"/>
</dbReference>
<dbReference type="FunFam" id="3.40.800.10:FF:000001">
    <property type="entry name" value="Agmatinase"/>
    <property type="match status" value="1"/>
</dbReference>
<dbReference type="Gene3D" id="3.40.800.10">
    <property type="entry name" value="Ureohydrolase domain"/>
    <property type="match status" value="1"/>
</dbReference>
<dbReference type="HAMAP" id="MF_01418">
    <property type="entry name" value="SpeB"/>
    <property type="match status" value="1"/>
</dbReference>
<dbReference type="InterPro" id="IPR023694">
    <property type="entry name" value="Agmatinase"/>
</dbReference>
<dbReference type="InterPro" id="IPR005925">
    <property type="entry name" value="Agmatinase-rel"/>
</dbReference>
<dbReference type="InterPro" id="IPR006035">
    <property type="entry name" value="Ureohydrolase"/>
</dbReference>
<dbReference type="InterPro" id="IPR023696">
    <property type="entry name" value="Ureohydrolase_dom_sf"/>
</dbReference>
<dbReference type="InterPro" id="IPR020855">
    <property type="entry name" value="Ureohydrolase_Mn_BS"/>
</dbReference>
<dbReference type="NCBIfam" id="TIGR01230">
    <property type="entry name" value="agmatinase"/>
    <property type="match status" value="1"/>
</dbReference>
<dbReference type="NCBIfam" id="NF002564">
    <property type="entry name" value="PRK02190.1"/>
    <property type="match status" value="1"/>
</dbReference>
<dbReference type="PANTHER" id="PTHR11358">
    <property type="entry name" value="ARGINASE/AGMATINASE"/>
    <property type="match status" value="1"/>
</dbReference>
<dbReference type="PANTHER" id="PTHR11358:SF26">
    <property type="entry name" value="GUANIDINO ACID HYDROLASE, MITOCHONDRIAL"/>
    <property type="match status" value="1"/>
</dbReference>
<dbReference type="Pfam" id="PF00491">
    <property type="entry name" value="Arginase"/>
    <property type="match status" value="1"/>
</dbReference>
<dbReference type="PIRSF" id="PIRSF036979">
    <property type="entry name" value="Arginase"/>
    <property type="match status" value="1"/>
</dbReference>
<dbReference type="SUPFAM" id="SSF52768">
    <property type="entry name" value="Arginase/deacetylase"/>
    <property type="match status" value="1"/>
</dbReference>
<dbReference type="PROSITE" id="PS01053">
    <property type="entry name" value="ARGINASE_1"/>
    <property type="match status" value="1"/>
</dbReference>
<dbReference type="PROSITE" id="PS51409">
    <property type="entry name" value="ARGINASE_2"/>
    <property type="match status" value="1"/>
</dbReference>
<organism>
    <name type="scientific">Escherichia coli O8 (strain IAI1)</name>
    <dbReference type="NCBI Taxonomy" id="585034"/>
    <lineage>
        <taxon>Bacteria</taxon>
        <taxon>Pseudomonadati</taxon>
        <taxon>Pseudomonadota</taxon>
        <taxon>Gammaproteobacteria</taxon>
        <taxon>Enterobacterales</taxon>
        <taxon>Enterobacteriaceae</taxon>
        <taxon>Escherichia</taxon>
    </lineage>
</organism>
<keyword id="KW-0378">Hydrolase</keyword>
<keyword id="KW-0464">Manganese</keyword>
<keyword id="KW-0479">Metal-binding</keyword>
<keyword id="KW-0620">Polyamine biosynthesis</keyword>
<keyword id="KW-0661">Putrescine biosynthesis</keyword>
<keyword id="KW-0745">Spermidine biosynthesis</keyword>
<protein>
    <recommendedName>
        <fullName evidence="1">Agmatinase</fullName>
        <ecNumber evidence="1">3.5.3.11</ecNumber>
    </recommendedName>
    <alternativeName>
        <fullName evidence="1">Agmatine ureohydrolase</fullName>
        <shortName evidence="1">AUH</shortName>
    </alternativeName>
</protein>
<accession>B7LYW6</accession>
<comment type="function">
    <text evidence="1">Catalyzes the formation of putrescine from agmatine.</text>
</comment>
<comment type="catalytic activity">
    <reaction evidence="1">
        <text>agmatine + H2O = urea + putrescine</text>
        <dbReference type="Rhea" id="RHEA:13929"/>
        <dbReference type="ChEBI" id="CHEBI:15377"/>
        <dbReference type="ChEBI" id="CHEBI:16199"/>
        <dbReference type="ChEBI" id="CHEBI:58145"/>
        <dbReference type="ChEBI" id="CHEBI:326268"/>
        <dbReference type="EC" id="3.5.3.11"/>
    </reaction>
</comment>
<comment type="cofactor">
    <cofactor evidence="1">
        <name>Mn(2+)</name>
        <dbReference type="ChEBI" id="CHEBI:29035"/>
    </cofactor>
</comment>
<comment type="pathway">
    <text evidence="1">Amine and polyamine biosynthesis; putrescine biosynthesis via agmatine pathway; putrescine from agmatine: step 1/1.</text>
</comment>
<comment type="similarity">
    <text evidence="1">Belongs to the arginase family. Agmatinase subfamily.</text>
</comment>
<name>SPEB_ECO8A</name>
<feature type="chain" id="PRO_1000145610" description="Agmatinase">
    <location>
        <begin position="1"/>
        <end position="306"/>
    </location>
</feature>
<feature type="binding site" evidence="1">
    <location>
        <position position="126"/>
    </location>
    <ligand>
        <name>Mn(2+)</name>
        <dbReference type="ChEBI" id="CHEBI:29035"/>
    </ligand>
</feature>
<feature type="binding site" evidence="1">
    <location>
        <position position="149"/>
    </location>
    <ligand>
        <name>Mn(2+)</name>
        <dbReference type="ChEBI" id="CHEBI:29035"/>
    </ligand>
</feature>
<feature type="binding site" evidence="1">
    <location>
        <position position="151"/>
    </location>
    <ligand>
        <name>Mn(2+)</name>
        <dbReference type="ChEBI" id="CHEBI:29035"/>
    </ligand>
</feature>
<feature type="binding site" evidence="1">
    <location>
        <position position="153"/>
    </location>
    <ligand>
        <name>Mn(2+)</name>
        <dbReference type="ChEBI" id="CHEBI:29035"/>
    </ligand>
</feature>
<feature type="binding site" evidence="1">
    <location>
        <position position="230"/>
    </location>
    <ligand>
        <name>Mn(2+)</name>
        <dbReference type="ChEBI" id="CHEBI:29035"/>
    </ligand>
</feature>
<feature type="binding site" evidence="1">
    <location>
        <position position="232"/>
    </location>
    <ligand>
        <name>Mn(2+)</name>
        <dbReference type="ChEBI" id="CHEBI:29035"/>
    </ligand>
</feature>
<evidence type="ECO:0000255" key="1">
    <source>
        <dbReference type="HAMAP-Rule" id="MF_01418"/>
    </source>
</evidence>
<proteinExistence type="inferred from homology"/>
<reference key="1">
    <citation type="journal article" date="2009" name="PLoS Genet.">
        <title>Organised genome dynamics in the Escherichia coli species results in highly diverse adaptive paths.</title>
        <authorList>
            <person name="Touchon M."/>
            <person name="Hoede C."/>
            <person name="Tenaillon O."/>
            <person name="Barbe V."/>
            <person name="Baeriswyl S."/>
            <person name="Bidet P."/>
            <person name="Bingen E."/>
            <person name="Bonacorsi S."/>
            <person name="Bouchier C."/>
            <person name="Bouvet O."/>
            <person name="Calteau A."/>
            <person name="Chiapello H."/>
            <person name="Clermont O."/>
            <person name="Cruveiller S."/>
            <person name="Danchin A."/>
            <person name="Diard M."/>
            <person name="Dossat C."/>
            <person name="Karoui M.E."/>
            <person name="Frapy E."/>
            <person name="Garry L."/>
            <person name="Ghigo J.M."/>
            <person name="Gilles A.M."/>
            <person name="Johnson J."/>
            <person name="Le Bouguenec C."/>
            <person name="Lescat M."/>
            <person name="Mangenot S."/>
            <person name="Martinez-Jehanne V."/>
            <person name="Matic I."/>
            <person name="Nassif X."/>
            <person name="Oztas S."/>
            <person name="Petit M.A."/>
            <person name="Pichon C."/>
            <person name="Rouy Z."/>
            <person name="Ruf C.S."/>
            <person name="Schneider D."/>
            <person name="Tourret J."/>
            <person name="Vacherie B."/>
            <person name="Vallenet D."/>
            <person name="Medigue C."/>
            <person name="Rocha E.P.C."/>
            <person name="Denamur E."/>
        </authorList>
    </citation>
    <scope>NUCLEOTIDE SEQUENCE [LARGE SCALE GENOMIC DNA]</scope>
    <source>
        <strain>IAI1</strain>
    </source>
</reference>
<sequence>MSTLGHQYDNSLVSNAFGFLRLPMNFQPYDSDADWVITGVPFDMATSGRAGGRHGPAAIRQVSTNLAWEHNRFPWNFDMRERLNVVDCGDLVYAFGDAREMSEKLQAHAEKLLAAGKRMLSFGGDHFVTLPLLRAHAKHFGKMALVHFDAHTDTYANGCEFDHGTMFYTAPKEGLIDPNHSVQIGIRTEFDKDNGFTVLDACQVNDRSVDDVIAQVKQIVGDMPVYLTFDIDCLDPAFAPGTGTPVIGGLTSDRAIKLVRGLKDLNIVGMDVVEVAPAYDQSEITALAAATLALEMLYIQAAKKGE</sequence>